<accession>Q3KLB6</accession>
<organism>
    <name type="scientific">Chlamydia trachomatis serovar A (strain ATCC VR-571B / DSM 19440 / HAR-13)</name>
    <dbReference type="NCBI Taxonomy" id="315277"/>
    <lineage>
        <taxon>Bacteria</taxon>
        <taxon>Pseudomonadati</taxon>
        <taxon>Chlamydiota</taxon>
        <taxon>Chlamydiia</taxon>
        <taxon>Chlamydiales</taxon>
        <taxon>Chlamydiaceae</taxon>
        <taxon>Chlamydia/Chlamydophila group</taxon>
        <taxon>Chlamydia</taxon>
    </lineage>
</organism>
<evidence type="ECO:0000255" key="1">
    <source>
        <dbReference type="HAMAP-Rule" id="MF_00184"/>
    </source>
</evidence>
<evidence type="ECO:0000255" key="2">
    <source>
        <dbReference type="PROSITE-ProRule" id="PRU01228"/>
    </source>
</evidence>
<proteinExistence type="inferred from homology"/>
<feature type="chain" id="PRO_1000020367" description="Threonine--tRNA ligase">
    <location>
        <begin position="1"/>
        <end position="635"/>
    </location>
</feature>
<feature type="domain" description="TGS" evidence="2">
    <location>
        <begin position="1"/>
        <end position="58"/>
    </location>
</feature>
<feature type="region of interest" description="Catalytic" evidence="1">
    <location>
        <begin position="237"/>
        <end position="528"/>
    </location>
</feature>
<feature type="binding site" evidence="1">
    <location>
        <position position="328"/>
    </location>
    <ligand>
        <name>Zn(2+)</name>
        <dbReference type="ChEBI" id="CHEBI:29105"/>
    </ligand>
</feature>
<feature type="binding site" evidence="1">
    <location>
        <position position="379"/>
    </location>
    <ligand>
        <name>Zn(2+)</name>
        <dbReference type="ChEBI" id="CHEBI:29105"/>
    </ligand>
</feature>
<feature type="binding site" evidence="1">
    <location>
        <position position="505"/>
    </location>
    <ligand>
        <name>Zn(2+)</name>
        <dbReference type="ChEBI" id="CHEBI:29105"/>
    </ligand>
</feature>
<name>SYT_CHLTA</name>
<sequence>MIHVTCNQEAFELPEGASAMDLANKMKQSHCFAGALINDQEKDLSTTLQDGDTVLFLTWDDPKGREIFLHTSAHILAQAVLRLWPSAQPTIGPVIDQGFYYDFANLSISEEDFPAIEAMAKTIAEEKFPISRQVFPDKEAALAYFSQNPFKAELIAELPEEVEISAYTQGEFLDLCRGPHLPSTAPVKAFKLLRTSSAYWKGDPSRESLIRIYGVSFPTTKELKEHLHQLEEAKKRDHRVLGTKLDLFSQQTCSAGMPFFHPRGMVVWNALVDYWKRLHQRAGYQQIQTPQLMNRELWEISGHWENYKENMYTLTVDEEDYAIKPMNCPGCMLYYKTQLHSYREFPLRIAEIGHVHRHELSGALSGLMRVRTFHQDDAHVFLTPEQVEEETLNILNLVSELYGTFGLEYHLELSTRPEQGTIGSDDLWELATKALKRALVKSQKPFIISPGEGAFYGPKIDIHVKDAINRTWQCGTIQLDMFLPERFDLKYTNAQGEKSTPIMLHRALFGSIERFLGILIEHFKGRFPLWLSPEHVRIITVADRHEARAQELAKHFSQMGIIVSVDSSNESVSKKIRNAQNMQVNYMITIGDKELETHLLAVRTRDNRVLNDIAVEQFSHVILEELRSLSLTPSL</sequence>
<dbReference type="EC" id="6.1.1.3" evidence="1"/>
<dbReference type="EMBL" id="CP000051">
    <property type="protein sequence ID" value="AAX50856.1"/>
    <property type="molecule type" value="Genomic_DNA"/>
</dbReference>
<dbReference type="RefSeq" id="WP_009871947.1">
    <property type="nucleotide sequence ID" value="NC_007429.1"/>
</dbReference>
<dbReference type="SMR" id="Q3KLB6"/>
<dbReference type="KEGG" id="cta:CTA_0631"/>
<dbReference type="HOGENOM" id="CLU_008554_0_1_0"/>
<dbReference type="Proteomes" id="UP000002532">
    <property type="component" value="Chromosome"/>
</dbReference>
<dbReference type="GO" id="GO:0005737">
    <property type="term" value="C:cytoplasm"/>
    <property type="evidence" value="ECO:0007669"/>
    <property type="project" value="UniProtKB-SubCell"/>
</dbReference>
<dbReference type="GO" id="GO:0005524">
    <property type="term" value="F:ATP binding"/>
    <property type="evidence" value="ECO:0007669"/>
    <property type="project" value="UniProtKB-UniRule"/>
</dbReference>
<dbReference type="GO" id="GO:0046872">
    <property type="term" value="F:metal ion binding"/>
    <property type="evidence" value="ECO:0007669"/>
    <property type="project" value="UniProtKB-KW"/>
</dbReference>
<dbReference type="GO" id="GO:0004829">
    <property type="term" value="F:threonine-tRNA ligase activity"/>
    <property type="evidence" value="ECO:0007669"/>
    <property type="project" value="UniProtKB-UniRule"/>
</dbReference>
<dbReference type="GO" id="GO:0000049">
    <property type="term" value="F:tRNA binding"/>
    <property type="evidence" value="ECO:0007669"/>
    <property type="project" value="UniProtKB-KW"/>
</dbReference>
<dbReference type="GO" id="GO:0006435">
    <property type="term" value="P:threonyl-tRNA aminoacylation"/>
    <property type="evidence" value="ECO:0007669"/>
    <property type="project" value="UniProtKB-UniRule"/>
</dbReference>
<dbReference type="CDD" id="cd00860">
    <property type="entry name" value="ThrRS_anticodon"/>
    <property type="match status" value="1"/>
</dbReference>
<dbReference type="CDD" id="cd00771">
    <property type="entry name" value="ThrRS_core"/>
    <property type="match status" value="1"/>
</dbReference>
<dbReference type="FunFam" id="3.30.930.10:FF:000019">
    <property type="entry name" value="Threonine--tRNA ligase"/>
    <property type="match status" value="1"/>
</dbReference>
<dbReference type="FunFam" id="3.40.50.800:FF:000001">
    <property type="entry name" value="Threonine--tRNA ligase"/>
    <property type="match status" value="1"/>
</dbReference>
<dbReference type="FunFam" id="3.30.980.10:FF:000005">
    <property type="entry name" value="Threonyl-tRNA synthetase, mitochondrial"/>
    <property type="match status" value="1"/>
</dbReference>
<dbReference type="Gene3D" id="3.10.20.30">
    <property type="match status" value="1"/>
</dbReference>
<dbReference type="Gene3D" id="3.30.54.20">
    <property type="match status" value="1"/>
</dbReference>
<dbReference type="Gene3D" id="3.40.50.800">
    <property type="entry name" value="Anticodon-binding domain"/>
    <property type="match status" value="1"/>
</dbReference>
<dbReference type="Gene3D" id="3.30.930.10">
    <property type="entry name" value="Bira Bifunctional Protein, Domain 2"/>
    <property type="match status" value="1"/>
</dbReference>
<dbReference type="Gene3D" id="3.30.980.10">
    <property type="entry name" value="Threonyl-trna Synthetase, Chain A, domain 2"/>
    <property type="match status" value="1"/>
</dbReference>
<dbReference type="HAMAP" id="MF_00184">
    <property type="entry name" value="Thr_tRNA_synth"/>
    <property type="match status" value="1"/>
</dbReference>
<dbReference type="InterPro" id="IPR002314">
    <property type="entry name" value="aa-tRNA-synt_IIb"/>
</dbReference>
<dbReference type="InterPro" id="IPR006195">
    <property type="entry name" value="aa-tRNA-synth_II"/>
</dbReference>
<dbReference type="InterPro" id="IPR045864">
    <property type="entry name" value="aa-tRNA-synth_II/BPL/LPL"/>
</dbReference>
<dbReference type="InterPro" id="IPR004154">
    <property type="entry name" value="Anticodon-bd"/>
</dbReference>
<dbReference type="InterPro" id="IPR036621">
    <property type="entry name" value="Anticodon-bd_dom_sf"/>
</dbReference>
<dbReference type="InterPro" id="IPR012675">
    <property type="entry name" value="Beta-grasp_dom_sf"/>
</dbReference>
<dbReference type="InterPro" id="IPR004095">
    <property type="entry name" value="TGS"/>
</dbReference>
<dbReference type="InterPro" id="IPR002320">
    <property type="entry name" value="Thr-tRNA-ligase_IIa"/>
</dbReference>
<dbReference type="InterPro" id="IPR018163">
    <property type="entry name" value="Thr/Ala-tRNA-synth_IIc_edit"/>
</dbReference>
<dbReference type="InterPro" id="IPR047246">
    <property type="entry name" value="ThrRS_anticodon"/>
</dbReference>
<dbReference type="InterPro" id="IPR033728">
    <property type="entry name" value="ThrRS_core"/>
</dbReference>
<dbReference type="InterPro" id="IPR012947">
    <property type="entry name" value="tRNA_SAD"/>
</dbReference>
<dbReference type="NCBIfam" id="TIGR00418">
    <property type="entry name" value="thrS"/>
    <property type="match status" value="1"/>
</dbReference>
<dbReference type="PANTHER" id="PTHR11451:SF44">
    <property type="entry name" value="THREONINE--TRNA LIGASE, CHLOROPLASTIC_MITOCHONDRIAL 2"/>
    <property type="match status" value="1"/>
</dbReference>
<dbReference type="PANTHER" id="PTHR11451">
    <property type="entry name" value="THREONINE-TRNA LIGASE"/>
    <property type="match status" value="1"/>
</dbReference>
<dbReference type="Pfam" id="PF03129">
    <property type="entry name" value="HGTP_anticodon"/>
    <property type="match status" value="1"/>
</dbReference>
<dbReference type="Pfam" id="PF02824">
    <property type="entry name" value="TGS"/>
    <property type="match status" value="1"/>
</dbReference>
<dbReference type="Pfam" id="PF00587">
    <property type="entry name" value="tRNA-synt_2b"/>
    <property type="match status" value="1"/>
</dbReference>
<dbReference type="Pfam" id="PF07973">
    <property type="entry name" value="tRNA_SAD"/>
    <property type="match status" value="1"/>
</dbReference>
<dbReference type="PRINTS" id="PR01047">
    <property type="entry name" value="TRNASYNTHTHR"/>
</dbReference>
<dbReference type="SMART" id="SM00863">
    <property type="entry name" value="tRNA_SAD"/>
    <property type="match status" value="1"/>
</dbReference>
<dbReference type="SUPFAM" id="SSF52954">
    <property type="entry name" value="Class II aaRS ABD-related"/>
    <property type="match status" value="1"/>
</dbReference>
<dbReference type="SUPFAM" id="SSF55681">
    <property type="entry name" value="Class II aaRS and biotin synthetases"/>
    <property type="match status" value="1"/>
</dbReference>
<dbReference type="SUPFAM" id="SSF55186">
    <property type="entry name" value="ThrRS/AlaRS common domain"/>
    <property type="match status" value="1"/>
</dbReference>
<dbReference type="PROSITE" id="PS50862">
    <property type="entry name" value="AA_TRNA_LIGASE_II"/>
    <property type="match status" value="1"/>
</dbReference>
<dbReference type="PROSITE" id="PS51880">
    <property type="entry name" value="TGS"/>
    <property type="match status" value="1"/>
</dbReference>
<gene>
    <name evidence="1" type="primary">thrS</name>
    <name type="ordered locus">CTA_0631</name>
</gene>
<reference key="1">
    <citation type="journal article" date="2005" name="Infect. Immun.">
        <title>Comparative genomic analysis of Chlamydia trachomatis oculotropic and genitotropic strains.</title>
        <authorList>
            <person name="Carlson J.H."/>
            <person name="Porcella S.F."/>
            <person name="McClarty G."/>
            <person name="Caldwell H.D."/>
        </authorList>
    </citation>
    <scope>NUCLEOTIDE SEQUENCE [LARGE SCALE GENOMIC DNA]</scope>
    <source>
        <strain>ATCC VR-571B / DSM 19440 / HAR-13</strain>
    </source>
</reference>
<keyword id="KW-0030">Aminoacyl-tRNA synthetase</keyword>
<keyword id="KW-0067">ATP-binding</keyword>
<keyword id="KW-0963">Cytoplasm</keyword>
<keyword id="KW-0436">Ligase</keyword>
<keyword id="KW-0479">Metal-binding</keyword>
<keyword id="KW-0547">Nucleotide-binding</keyword>
<keyword id="KW-0648">Protein biosynthesis</keyword>
<keyword id="KW-0694">RNA-binding</keyword>
<keyword id="KW-0820">tRNA-binding</keyword>
<keyword id="KW-0862">Zinc</keyword>
<comment type="function">
    <text evidence="1">Catalyzes the attachment of threonine to tRNA(Thr) in a two-step reaction: L-threonine is first activated by ATP to form Thr-AMP and then transferred to the acceptor end of tRNA(Thr). Also edits incorrectly charged L-seryl-tRNA(Thr).</text>
</comment>
<comment type="catalytic activity">
    <reaction evidence="1">
        <text>tRNA(Thr) + L-threonine + ATP = L-threonyl-tRNA(Thr) + AMP + diphosphate + H(+)</text>
        <dbReference type="Rhea" id="RHEA:24624"/>
        <dbReference type="Rhea" id="RHEA-COMP:9670"/>
        <dbReference type="Rhea" id="RHEA-COMP:9704"/>
        <dbReference type="ChEBI" id="CHEBI:15378"/>
        <dbReference type="ChEBI" id="CHEBI:30616"/>
        <dbReference type="ChEBI" id="CHEBI:33019"/>
        <dbReference type="ChEBI" id="CHEBI:57926"/>
        <dbReference type="ChEBI" id="CHEBI:78442"/>
        <dbReference type="ChEBI" id="CHEBI:78534"/>
        <dbReference type="ChEBI" id="CHEBI:456215"/>
        <dbReference type="EC" id="6.1.1.3"/>
    </reaction>
</comment>
<comment type="cofactor">
    <cofactor evidence="1">
        <name>Zn(2+)</name>
        <dbReference type="ChEBI" id="CHEBI:29105"/>
    </cofactor>
    <text evidence="1">Binds 1 zinc ion per subunit.</text>
</comment>
<comment type="subunit">
    <text evidence="1">Homodimer.</text>
</comment>
<comment type="subcellular location">
    <subcellularLocation>
        <location evidence="1">Cytoplasm</location>
    </subcellularLocation>
</comment>
<comment type="similarity">
    <text evidence="1">Belongs to the class-II aminoacyl-tRNA synthetase family.</text>
</comment>
<protein>
    <recommendedName>
        <fullName evidence="1">Threonine--tRNA ligase</fullName>
        <ecNumber evidence="1">6.1.1.3</ecNumber>
    </recommendedName>
    <alternativeName>
        <fullName evidence="1">Threonyl-tRNA synthetase</fullName>
        <shortName evidence="1">ThrRS</shortName>
    </alternativeName>
</protein>